<proteinExistence type="evidence at protein level"/>
<protein>
    <recommendedName>
        <fullName>Gamma-crystallin S</fullName>
    </recommendedName>
    <alternativeName>
        <fullName>Beta-crystallin S</fullName>
    </alternativeName>
    <alternativeName>
        <fullName>Gamma-S-crystallin</fullName>
    </alternativeName>
</protein>
<evidence type="ECO:0000250" key="1">
    <source>
        <dbReference type="UniProtKB" id="P22914"/>
    </source>
</evidence>
<evidence type="ECO:0000255" key="2">
    <source>
        <dbReference type="PROSITE-ProRule" id="PRU00028"/>
    </source>
</evidence>
<evidence type="ECO:0000305" key="3"/>
<evidence type="ECO:0007829" key="4">
    <source>
        <dbReference type="PDB" id="1A7H"/>
    </source>
</evidence>
<name>CRYGS_BOVIN</name>
<comment type="function">
    <text>Crystallins are the dominant structural components of the vertebrate eye lens.</text>
</comment>
<comment type="subunit">
    <text>Monomer.</text>
</comment>
<comment type="domain">
    <text>Has a two-domain beta-structure, folded into four very similar Greek key motifs.</text>
</comment>
<comment type="similarity">
    <text evidence="3">Belongs to the beta/gamma-crystallin family.</text>
</comment>
<organism>
    <name type="scientific">Bos taurus</name>
    <name type="common">Bovine</name>
    <dbReference type="NCBI Taxonomy" id="9913"/>
    <lineage>
        <taxon>Eukaryota</taxon>
        <taxon>Metazoa</taxon>
        <taxon>Chordata</taxon>
        <taxon>Craniata</taxon>
        <taxon>Vertebrata</taxon>
        <taxon>Euteleostomi</taxon>
        <taxon>Mammalia</taxon>
        <taxon>Eutheria</taxon>
        <taxon>Laurasiatheria</taxon>
        <taxon>Artiodactyla</taxon>
        <taxon>Ruminantia</taxon>
        <taxon>Pecora</taxon>
        <taxon>Bovidae</taxon>
        <taxon>Bovinae</taxon>
        <taxon>Bos</taxon>
    </lineage>
</organism>
<feature type="initiator methionine" description="Removed">
    <location>
        <position position="1"/>
    </location>
</feature>
<feature type="chain" id="PRO_0000057564" description="Gamma-crystallin S">
    <location>
        <begin position="2"/>
        <end position="178"/>
    </location>
</feature>
<feature type="domain" description="Beta/gamma crystallin 'Greek key' 1" evidence="2">
    <location>
        <begin position="6"/>
        <end position="44"/>
    </location>
</feature>
<feature type="domain" description="Beta/gamma crystallin 'Greek key' 2" evidence="2">
    <location>
        <begin position="45"/>
        <end position="87"/>
    </location>
</feature>
<feature type="domain" description="Beta/gamma crystallin 'Greek key' 3" evidence="2">
    <location>
        <begin position="94"/>
        <end position="134"/>
    </location>
</feature>
<feature type="domain" description="Beta/gamma crystallin 'Greek key' 4" evidence="2">
    <location>
        <begin position="135"/>
        <end position="177"/>
    </location>
</feature>
<feature type="region of interest" description="N-terminal arm">
    <location>
        <begin position="2"/>
        <end position="5"/>
    </location>
</feature>
<feature type="region of interest" description="Connecting peptide">
    <location>
        <begin position="88"/>
        <end position="93"/>
    </location>
</feature>
<feature type="modified residue" description="N-acetylserine" evidence="1 3">
    <location>
        <position position="2"/>
    </location>
</feature>
<feature type="strand" evidence="4">
    <location>
        <begin position="95"/>
        <end position="101"/>
    </location>
</feature>
<feature type="helix" evidence="4">
    <location>
        <begin position="102"/>
        <end position="104"/>
    </location>
</feature>
<feature type="strand" evidence="4">
    <location>
        <begin position="108"/>
        <end position="113"/>
    </location>
</feature>
<feature type="helix" evidence="4">
    <location>
        <begin position="118"/>
        <end position="122"/>
    </location>
</feature>
<feature type="strand" evidence="4">
    <location>
        <begin position="129"/>
        <end position="135"/>
    </location>
</feature>
<feature type="strand" evidence="4">
    <location>
        <begin position="137"/>
        <end position="142"/>
    </location>
</feature>
<feature type="turn" evidence="4">
    <location>
        <begin position="143"/>
        <end position="145"/>
    </location>
</feature>
<feature type="strand" evidence="4">
    <location>
        <begin position="146"/>
        <end position="152"/>
    </location>
</feature>
<feature type="strand" evidence="4">
    <location>
        <begin position="154"/>
        <end position="159"/>
    </location>
</feature>
<feature type="helix" evidence="4">
    <location>
        <begin position="160"/>
        <end position="163"/>
    </location>
</feature>
<feature type="strand" evidence="4">
    <location>
        <begin position="172"/>
        <end position="175"/>
    </location>
</feature>
<sequence length="178" mass="20928">MSKAGTKITFFEDKNFQGRHYDSDCDCADFHMYLSRCNSIRVEGGTWAVYERPNFAGYMYILPRGEYPEYQHWMGLNDRLSSCRAVHLSSGGQYKLQIFEKGDFNGQMHETTEDCPSIMEQFHMREVHSCKVLEGAWIFYELPNYRGRQYLLDKKEYRKPVDWGAASPAVQSFRRIVE</sequence>
<keyword id="KW-0002">3D-structure</keyword>
<keyword id="KW-0007">Acetylation</keyword>
<keyword id="KW-0273">Eye lens protein</keyword>
<keyword id="KW-1185">Reference proteome</keyword>
<keyword id="KW-0677">Repeat</keyword>
<accession>P06504</accession>
<reference key="1">
    <citation type="journal article" date="1985" name="EMBO J.">
        <title>Beta s-crystallin: structure and evolution of a distinct member of the beta gamma-superfamily.</title>
        <authorList>
            <person name="Quax-Jeuken Y."/>
            <person name="Driessen H.P.C."/>
            <person name="Leunissen J."/>
            <person name="Quax W.J."/>
            <person name="de Jong W.W."/>
            <person name="Bloemendal H."/>
        </authorList>
    </citation>
    <scope>NUCLEOTIDE SEQUENCE [MRNA]</scope>
</reference>
<reference key="2">
    <citation type="journal article" date="1989" name="Gene">
        <title>Structure of the bovine eye lens gamma s-crystallin gene (formerly beta s).</title>
        <authorList>
            <person name="van Rens G.L.M."/>
            <person name="Raats J.M.H."/>
            <person name="Driessen H.P.C."/>
            <person name="Oldenburg M."/>
            <person name="Wijnen J.T."/>
            <person name="Khan P.M."/>
            <person name="de Jong W.W."/>
            <person name="Bloemendal H."/>
        </authorList>
    </citation>
    <scope>NUCLEOTIDE SEQUENCE [GENOMIC DNA]</scope>
</reference>
<reference key="3">
    <citation type="journal article" date="1998" name="Protein Eng.">
        <title>The C-terminal domains of gammaS-crystallin pair about a distorted twofold axis.</title>
        <authorList>
            <person name="Basak A.K."/>
            <person name="Kroone R.C."/>
            <person name="Lubsen N.H."/>
            <person name="Naylor C.E."/>
            <person name="Jaenicke R."/>
            <person name="Slingsby C."/>
        </authorList>
    </citation>
    <scope>X-RAY CRYSTALLOGRAPHY (2.56 ANGSTROMS) OF 93-178</scope>
</reference>
<gene>
    <name type="primary">CRYGS</name>
</gene>
<dbReference type="EMBL" id="X03006">
    <property type="protein sequence ID" value="CAA26791.1"/>
    <property type="molecule type" value="mRNA"/>
</dbReference>
<dbReference type="EMBL" id="M21095">
    <property type="protein sequence ID" value="AAA30477.1"/>
    <property type="molecule type" value="Genomic_DNA"/>
</dbReference>
<dbReference type="EMBL" id="M21094">
    <property type="protein sequence ID" value="AAA30477.1"/>
    <property type="status" value="JOINED"/>
    <property type="molecule type" value="Genomic_DNA"/>
</dbReference>
<dbReference type="PIR" id="A91017">
    <property type="entry name" value="CYBOS"/>
</dbReference>
<dbReference type="RefSeq" id="NP_776717.1">
    <property type="nucleotide sequence ID" value="NM_174292.2"/>
</dbReference>
<dbReference type="PDB" id="1A7H">
    <property type="method" value="X-ray"/>
    <property type="resolution" value="2.56 A"/>
    <property type="chains" value="A/B=94-178"/>
</dbReference>
<dbReference type="PDBsum" id="1A7H"/>
<dbReference type="PCDDB" id="P06504"/>
<dbReference type="SMR" id="P06504"/>
<dbReference type="FunCoup" id="P06504">
    <property type="interactions" value="185"/>
</dbReference>
<dbReference type="STRING" id="9913.ENSBTAP00000004084"/>
<dbReference type="PaxDb" id="9913-ENSBTAP00000004084"/>
<dbReference type="GeneID" id="281724"/>
<dbReference type="KEGG" id="bta:281724"/>
<dbReference type="CTD" id="1427"/>
<dbReference type="VEuPathDB" id="HostDB:ENSBTAG00000003140"/>
<dbReference type="eggNOG" id="ENOG502QQAM">
    <property type="taxonomic scope" value="Eukaryota"/>
</dbReference>
<dbReference type="HOGENOM" id="CLU_081883_1_1_1"/>
<dbReference type="InParanoid" id="P06504"/>
<dbReference type="OMA" id="MEQFHIR"/>
<dbReference type="OrthoDB" id="8407241at2759"/>
<dbReference type="EvolutionaryTrace" id="P06504"/>
<dbReference type="Proteomes" id="UP000009136">
    <property type="component" value="Chromosome 1"/>
</dbReference>
<dbReference type="Bgee" id="ENSBTAG00000003140">
    <property type="expression patterns" value="Expressed in pigment epithelium of eye and 87 other cell types or tissues"/>
</dbReference>
<dbReference type="GO" id="GO:0005212">
    <property type="term" value="F:structural constituent of eye lens"/>
    <property type="evidence" value="ECO:0000318"/>
    <property type="project" value="GO_Central"/>
</dbReference>
<dbReference type="GO" id="GO:0002088">
    <property type="term" value="P:lens development in camera-type eye"/>
    <property type="evidence" value="ECO:0000318"/>
    <property type="project" value="GO_Central"/>
</dbReference>
<dbReference type="GO" id="GO:0007601">
    <property type="term" value="P:visual perception"/>
    <property type="evidence" value="ECO:0000318"/>
    <property type="project" value="GO_Central"/>
</dbReference>
<dbReference type="FunFam" id="2.60.20.10:FF:000001">
    <property type="entry name" value="Crystallin gamma S"/>
    <property type="match status" value="1"/>
</dbReference>
<dbReference type="FunFam" id="2.60.20.10:FF:000003">
    <property type="entry name" value="Crystallin gamma S"/>
    <property type="match status" value="1"/>
</dbReference>
<dbReference type="Gene3D" id="2.60.20.10">
    <property type="entry name" value="Crystallins"/>
    <property type="match status" value="2"/>
</dbReference>
<dbReference type="InterPro" id="IPR050252">
    <property type="entry name" value="Beta/Gamma-Crystallin"/>
</dbReference>
<dbReference type="InterPro" id="IPR001064">
    <property type="entry name" value="Beta/gamma_crystallin"/>
</dbReference>
<dbReference type="InterPro" id="IPR011024">
    <property type="entry name" value="G_crystallin-like"/>
</dbReference>
<dbReference type="PANTHER" id="PTHR11818">
    <property type="entry name" value="BETA/GAMMA CRYSTALLIN"/>
    <property type="match status" value="1"/>
</dbReference>
<dbReference type="PANTHER" id="PTHR11818:SF6">
    <property type="entry name" value="GAMMA-CRYSTALLIN S"/>
    <property type="match status" value="1"/>
</dbReference>
<dbReference type="Pfam" id="PF00030">
    <property type="entry name" value="Crystall"/>
    <property type="match status" value="2"/>
</dbReference>
<dbReference type="PRINTS" id="PR01367">
    <property type="entry name" value="BGCRYSTALLIN"/>
</dbReference>
<dbReference type="SMART" id="SM00247">
    <property type="entry name" value="XTALbg"/>
    <property type="match status" value="2"/>
</dbReference>
<dbReference type="SUPFAM" id="SSF49695">
    <property type="entry name" value="gamma-Crystallin-like"/>
    <property type="match status" value="1"/>
</dbReference>
<dbReference type="PROSITE" id="PS50915">
    <property type="entry name" value="CRYSTALLIN_BETA_GAMMA"/>
    <property type="match status" value="4"/>
</dbReference>